<sequence>MSHRHTAYVGRFAPSPTGPLHFGSLITAIASYCDAKVHQGKWLVRIEDTDIPRIYPGSEAHILACIDAFGFQPDGEILFQRDRLDLYENVLEQLKAQNLVYACQCTRKMLGSNAIYSGTCRNLNLPFQNQAIRVKVKDQLICFDDRLQGIQCSNLAHDLGDFVLKRRDGIINYQLAVVVDDYMQGMTHVVRGADLLDNTQRQIWLGDLLGYPRLHYLHLPLAMNAQGQKLSKQNMAAALDLSKASQYIQQSLAALHQPAVDLDTPDRMLKQAVAQWQLNHIPHQTRLAGTYL</sequence>
<keyword id="KW-0030">Aminoacyl-tRNA synthetase</keyword>
<keyword id="KW-0067">ATP-binding</keyword>
<keyword id="KW-0436">Ligase</keyword>
<keyword id="KW-0479">Metal-binding</keyword>
<keyword id="KW-0547">Nucleotide-binding</keyword>
<keyword id="KW-0862">Zinc</keyword>
<dbReference type="EC" id="6.1.1.-" evidence="1"/>
<dbReference type="EMBL" id="CR543861">
    <property type="protein sequence ID" value="CAG67237.1"/>
    <property type="molecule type" value="Genomic_DNA"/>
</dbReference>
<dbReference type="SMR" id="Q6FFC0"/>
<dbReference type="STRING" id="202950.GCA_001485005_00546"/>
<dbReference type="GeneID" id="45232786"/>
<dbReference type="KEGG" id="aci:ACIAD0272"/>
<dbReference type="eggNOG" id="COG0008">
    <property type="taxonomic scope" value="Bacteria"/>
</dbReference>
<dbReference type="HOGENOM" id="CLU_015768_0_1_6"/>
<dbReference type="OrthoDB" id="9807503at2"/>
<dbReference type="BioCyc" id="ASP62977:ACIAD_RS01285-MONOMER"/>
<dbReference type="Proteomes" id="UP000000430">
    <property type="component" value="Chromosome"/>
</dbReference>
<dbReference type="GO" id="GO:0005829">
    <property type="term" value="C:cytosol"/>
    <property type="evidence" value="ECO:0007669"/>
    <property type="project" value="TreeGrafter"/>
</dbReference>
<dbReference type="GO" id="GO:0005524">
    <property type="term" value="F:ATP binding"/>
    <property type="evidence" value="ECO:0007669"/>
    <property type="project" value="UniProtKB-KW"/>
</dbReference>
<dbReference type="GO" id="GO:0004818">
    <property type="term" value="F:glutamate-tRNA ligase activity"/>
    <property type="evidence" value="ECO:0007669"/>
    <property type="project" value="TreeGrafter"/>
</dbReference>
<dbReference type="GO" id="GO:0008270">
    <property type="term" value="F:zinc ion binding"/>
    <property type="evidence" value="ECO:0007669"/>
    <property type="project" value="UniProtKB-UniRule"/>
</dbReference>
<dbReference type="GO" id="GO:0006424">
    <property type="term" value="P:glutamyl-tRNA aminoacylation"/>
    <property type="evidence" value="ECO:0007669"/>
    <property type="project" value="InterPro"/>
</dbReference>
<dbReference type="GO" id="GO:0006400">
    <property type="term" value="P:tRNA modification"/>
    <property type="evidence" value="ECO:0007669"/>
    <property type="project" value="InterPro"/>
</dbReference>
<dbReference type="FunFam" id="3.40.50.620:FF:000093">
    <property type="entry name" value="Glutamyl-Q tRNA(Asp) synthetase"/>
    <property type="match status" value="1"/>
</dbReference>
<dbReference type="Gene3D" id="3.40.50.620">
    <property type="entry name" value="HUPs"/>
    <property type="match status" value="1"/>
</dbReference>
<dbReference type="HAMAP" id="MF_01428">
    <property type="entry name" value="Glu_Q_tRNA_synth"/>
    <property type="match status" value="1"/>
</dbReference>
<dbReference type="InterPro" id="IPR022380">
    <property type="entry name" value="Glu-Q_tRNA(Asp)_Synthase"/>
</dbReference>
<dbReference type="InterPro" id="IPR000924">
    <property type="entry name" value="Glu/Gln-tRNA-synth"/>
</dbReference>
<dbReference type="InterPro" id="IPR020058">
    <property type="entry name" value="Glu/Gln-tRNA-synth_Ib_cat-dom"/>
</dbReference>
<dbReference type="InterPro" id="IPR049940">
    <property type="entry name" value="GluQ/Sye"/>
</dbReference>
<dbReference type="InterPro" id="IPR014729">
    <property type="entry name" value="Rossmann-like_a/b/a_fold"/>
</dbReference>
<dbReference type="NCBIfam" id="NF004314">
    <property type="entry name" value="PRK05710.1-3"/>
    <property type="match status" value="1"/>
</dbReference>
<dbReference type="NCBIfam" id="TIGR03838">
    <property type="entry name" value="queuosine_YadB"/>
    <property type="match status" value="1"/>
</dbReference>
<dbReference type="PANTHER" id="PTHR43311">
    <property type="entry name" value="GLUTAMATE--TRNA LIGASE"/>
    <property type="match status" value="1"/>
</dbReference>
<dbReference type="PANTHER" id="PTHR43311:SF1">
    <property type="entry name" value="GLUTAMYL-Q TRNA(ASP) SYNTHETASE"/>
    <property type="match status" value="1"/>
</dbReference>
<dbReference type="Pfam" id="PF00749">
    <property type="entry name" value="tRNA-synt_1c"/>
    <property type="match status" value="1"/>
</dbReference>
<dbReference type="PRINTS" id="PR00987">
    <property type="entry name" value="TRNASYNTHGLU"/>
</dbReference>
<dbReference type="SUPFAM" id="SSF52374">
    <property type="entry name" value="Nucleotidylyl transferase"/>
    <property type="match status" value="1"/>
</dbReference>
<reference key="1">
    <citation type="journal article" date="2004" name="Nucleic Acids Res.">
        <title>Unique features revealed by the genome sequence of Acinetobacter sp. ADP1, a versatile and naturally transformation competent bacterium.</title>
        <authorList>
            <person name="Barbe V."/>
            <person name="Vallenet D."/>
            <person name="Fonknechten N."/>
            <person name="Kreimeyer A."/>
            <person name="Oztas S."/>
            <person name="Labarre L."/>
            <person name="Cruveiller S."/>
            <person name="Robert C."/>
            <person name="Duprat S."/>
            <person name="Wincker P."/>
            <person name="Ornston L.N."/>
            <person name="Weissenbach J."/>
            <person name="Marliere P."/>
            <person name="Cohen G.N."/>
            <person name="Medigue C."/>
        </authorList>
    </citation>
    <scope>NUCLEOTIDE SEQUENCE [LARGE SCALE GENOMIC DNA]</scope>
    <source>
        <strain>ATCC 33305 / BD413 / ADP1</strain>
    </source>
</reference>
<protein>
    <recommendedName>
        <fullName evidence="1">Glutamyl-Q tRNA(Asp) synthetase</fullName>
        <shortName evidence="1">Glu-Q-RSs</shortName>
        <ecNumber evidence="1">6.1.1.-</ecNumber>
    </recommendedName>
</protein>
<proteinExistence type="inferred from homology"/>
<name>GLUQ_ACIAD</name>
<evidence type="ECO:0000255" key="1">
    <source>
        <dbReference type="HAMAP-Rule" id="MF_01428"/>
    </source>
</evidence>
<accession>Q6FFC0</accession>
<organism>
    <name type="scientific">Acinetobacter baylyi (strain ATCC 33305 / BD413 / ADP1)</name>
    <dbReference type="NCBI Taxonomy" id="62977"/>
    <lineage>
        <taxon>Bacteria</taxon>
        <taxon>Pseudomonadati</taxon>
        <taxon>Pseudomonadota</taxon>
        <taxon>Gammaproteobacteria</taxon>
        <taxon>Moraxellales</taxon>
        <taxon>Moraxellaceae</taxon>
        <taxon>Acinetobacter</taxon>
    </lineage>
</organism>
<comment type="function">
    <text evidence="1">Catalyzes the tRNA-independent activation of glutamate in presence of ATP and the subsequent transfer of glutamate onto a tRNA(Asp). Glutamate is transferred on the 2-amino-5-(4,5-dihydroxy-2-cyclopenten-1-yl) moiety of the queuosine in the wobble position of the QUC anticodon.</text>
</comment>
<comment type="cofactor">
    <cofactor evidence="1">
        <name>Zn(2+)</name>
        <dbReference type="ChEBI" id="CHEBI:29105"/>
    </cofactor>
    <text evidence="1">Binds 1 zinc ion per subunit.</text>
</comment>
<comment type="similarity">
    <text evidence="1">Belongs to the class-I aminoacyl-tRNA synthetase family. GluQ subfamily.</text>
</comment>
<feature type="chain" id="PRO_0000208284" description="Glutamyl-Q tRNA(Asp) synthetase">
    <location>
        <begin position="1"/>
        <end position="292"/>
    </location>
</feature>
<feature type="short sequence motif" description="'HIGH' region">
    <location>
        <begin position="14"/>
        <end position="24"/>
    </location>
</feature>
<feature type="short sequence motif" description="'KMSKS' region">
    <location>
        <begin position="229"/>
        <end position="233"/>
    </location>
</feature>
<feature type="binding site" evidence="1">
    <location>
        <begin position="11"/>
        <end position="15"/>
    </location>
    <ligand>
        <name>L-glutamate</name>
        <dbReference type="ChEBI" id="CHEBI:29985"/>
    </ligand>
</feature>
<feature type="binding site" evidence="1">
    <location>
        <position position="47"/>
    </location>
    <ligand>
        <name>L-glutamate</name>
        <dbReference type="ChEBI" id="CHEBI:29985"/>
    </ligand>
</feature>
<feature type="binding site" evidence="1">
    <location>
        <position position="103"/>
    </location>
    <ligand>
        <name>Zn(2+)</name>
        <dbReference type="ChEBI" id="CHEBI:29105"/>
    </ligand>
</feature>
<feature type="binding site" evidence="1">
    <location>
        <position position="105"/>
    </location>
    <ligand>
        <name>Zn(2+)</name>
        <dbReference type="ChEBI" id="CHEBI:29105"/>
    </ligand>
</feature>
<feature type="binding site" evidence="1">
    <location>
        <position position="116"/>
    </location>
    <ligand>
        <name>Zn(2+)</name>
        <dbReference type="ChEBI" id="CHEBI:29105"/>
    </ligand>
</feature>
<feature type="binding site" evidence="1">
    <location>
        <position position="120"/>
    </location>
    <ligand>
        <name>Zn(2+)</name>
        <dbReference type="ChEBI" id="CHEBI:29105"/>
    </ligand>
</feature>
<feature type="binding site" evidence="1">
    <location>
        <position position="173"/>
    </location>
    <ligand>
        <name>L-glutamate</name>
        <dbReference type="ChEBI" id="CHEBI:29985"/>
    </ligand>
</feature>
<feature type="binding site" evidence="1">
    <location>
        <position position="191"/>
    </location>
    <ligand>
        <name>L-glutamate</name>
        <dbReference type="ChEBI" id="CHEBI:29985"/>
    </ligand>
</feature>
<feature type="binding site" evidence="1">
    <location>
        <position position="232"/>
    </location>
    <ligand>
        <name>ATP</name>
        <dbReference type="ChEBI" id="CHEBI:30616"/>
    </ligand>
</feature>
<gene>
    <name evidence="1" type="primary">gluQ</name>
    <name type="ordered locus">ACIAD0272</name>
</gene>